<name>RS12_DELAS</name>
<dbReference type="EMBL" id="CP000884">
    <property type="protein sequence ID" value="ABX33032.1"/>
    <property type="molecule type" value="Genomic_DNA"/>
</dbReference>
<dbReference type="RefSeq" id="WP_012202325.1">
    <property type="nucleotide sequence ID" value="NC_010002.1"/>
</dbReference>
<dbReference type="SMR" id="A9BPR3"/>
<dbReference type="STRING" id="398578.Daci_0386"/>
<dbReference type="GeneID" id="24117306"/>
<dbReference type="KEGG" id="dac:Daci_0386"/>
<dbReference type="eggNOG" id="COG0048">
    <property type="taxonomic scope" value="Bacteria"/>
</dbReference>
<dbReference type="HOGENOM" id="CLU_104295_1_2_4"/>
<dbReference type="Proteomes" id="UP000000784">
    <property type="component" value="Chromosome"/>
</dbReference>
<dbReference type="GO" id="GO:0015935">
    <property type="term" value="C:small ribosomal subunit"/>
    <property type="evidence" value="ECO:0007669"/>
    <property type="project" value="InterPro"/>
</dbReference>
<dbReference type="GO" id="GO:0019843">
    <property type="term" value="F:rRNA binding"/>
    <property type="evidence" value="ECO:0007669"/>
    <property type="project" value="UniProtKB-UniRule"/>
</dbReference>
<dbReference type="GO" id="GO:0003735">
    <property type="term" value="F:structural constituent of ribosome"/>
    <property type="evidence" value="ECO:0007669"/>
    <property type="project" value="InterPro"/>
</dbReference>
<dbReference type="GO" id="GO:0000049">
    <property type="term" value="F:tRNA binding"/>
    <property type="evidence" value="ECO:0007669"/>
    <property type="project" value="UniProtKB-UniRule"/>
</dbReference>
<dbReference type="GO" id="GO:0006412">
    <property type="term" value="P:translation"/>
    <property type="evidence" value="ECO:0007669"/>
    <property type="project" value="UniProtKB-UniRule"/>
</dbReference>
<dbReference type="CDD" id="cd03368">
    <property type="entry name" value="Ribosomal_S12"/>
    <property type="match status" value="1"/>
</dbReference>
<dbReference type="FunFam" id="2.40.50.140:FF:000001">
    <property type="entry name" value="30S ribosomal protein S12"/>
    <property type="match status" value="1"/>
</dbReference>
<dbReference type="Gene3D" id="2.40.50.140">
    <property type="entry name" value="Nucleic acid-binding proteins"/>
    <property type="match status" value="1"/>
</dbReference>
<dbReference type="HAMAP" id="MF_00403_B">
    <property type="entry name" value="Ribosomal_uS12_B"/>
    <property type="match status" value="1"/>
</dbReference>
<dbReference type="InterPro" id="IPR012340">
    <property type="entry name" value="NA-bd_OB-fold"/>
</dbReference>
<dbReference type="InterPro" id="IPR006032">
    <property type="entry name" value="Ribosomal_uS12"/>
</dbReference>
<dbReference type="InterPro" id="IPR005679">
    <property type="entry name" value="Ribosomal_uS12_bac"/>
</dbReference>
<dbReference type="NCBIfam" id="TIGR00981">
    <property type="entry name" value="rpsL_bact"/>
    <property type="match status" value="1"/>
</dbReference>
<dbReference type="PANTHER" id="PTHR11652">
    <property type="entry name" value="30S RIBOSOMAL PROTEIN S12 FAMILY MEMBER"/>
    <property type="match status" value="1"/>
</dbReference>
<dbReference type="Pfam" id="PF00164">
    <property type="entry name" value="Ribosom_S12_S23"/>
    <property type="match status" value="1"/>
</dbReference>
<dbReference type="PIRSF" id="PIRSF002133">
    <property type="entry name" value="Ribosomal_S12/S23"/>
    <property type="match status" value="1"/>
</dbReference>
<dbReference type="PRINTS" id="PR01034">
    <property type="entry name" value="RIBOSOMALS12"/>
</dbReference>
<dbReference type="SUPFAM" id="SSF50249">
    <property type="entry name" value="Nucleic acid-binding proteins"/>
    <property type="match status" value="1"/>
</dbReference>
<dbReference type="PROSITE" id="PS00055">
    <property type="entry name" value="RIBOSOMAL_S12"/>
    <property type="match status" value="1"/>
</dbReference>
<reference key="1">
    <citation type="submission" date="2007-11" db="EMBL/GenBank/DDBJ databases">
        <title>Complete sequence of Delftia acidovorans DSM 14801 / SPH-1.</title>
        <authorList>
            <person name="Copeland A."/>
            <person name="Lucas S."/>
            <person name="Lapidus A."/>
            <person name="Barry K."/>
            <person name="Glavina del Rio T."/>
            <person name="Dalin E."/>
            <person name="Tice H."/>
            <person name="Pitluck S."/>
            <person name="Lowry S."/>
            <person name="Clum A."/>
            <person name="Schmutz J."/>
            <person name="Larimer F."/>
            <person name="Land M."/>
            <person name="Hauser L."/>
            <person name="Kyrpides N."/>
            <person name="Kim E."/>
            <person name="Schleheck D."/>
            <person name="Richardson P."/>
        </authorList>
    </citation>
    <scope>NUCLEOTIDE SEQUENCE [LARGE SCALE GENOMIC DNA]</scope>
    <source>
        <strain>DSM 14801 / SPH-1</strain>
    </source>
</reference>
<sequence>MPTINQLVRQGRTVEVVKSKSPAMENCPQRRGVCTRVYTTTPKKPNSALRKVAKVRLTNGFEVISYIGGEGHNLQEHSVVLVRGGRVKDLPGVRYHIVRGSLDLQGVKDRKQSRSKYGAKKPKAK</sequence>
<accession>A9BPR3</accession>
<comment type="function">
    <text evidence="2">With S4 and S5 plays an important role in translational accuracy.</text>
</comment>
<comment type="function">
    <text evidence="2">Interacts with and stabilizes bases of the 16S rRNA that are involved in tRNA selection in the A site and with the mRNA backbone. Located at the interface of the 30S and 50S subunits, it traverses the body of the 30S subunit contacting proteins on the other side and probably holding the rRNA structure together. The combined cluster of proteins S8, S12 and S17 appears to hold together the shoulder and platform of the 30S subunit.</text>
</comment>
<comment type="subunit">
    <text evidence="2">Part of the 30S ribosomal subunit. Contacts proteins S8 and S17. May interact with IF1 in the 30S initiation complex.</text>
</comment>
<comment type="similarity">
    <text evidence="2">Belongs to the universal ribosomal protein uS12 family.</text>
</comment>
<protein>
    <recommendedName>
        <fullName evidence="2">Small ribosomal subunit protein uS12</fullName>
    </recommendedName>
    <alternativeName>
        <fullName evidence="4">30S ribosomal protein S12</fullName>
    </alternativeName>
</protein>
<gene>
    <name evidence="2" type="primary">rpsL</name>
    <name type="ordered locus">Daci_0386</name>
</gene>
<evidence type="ECO:0000250" key="1"/>
<evidence type="ECO:0000255" key="2">
    <source>
        <dbReference type="HAMAP-Rule" id="MF_00403"/>
    </source>
</evidence>
<evidence type="ECO:0000256" key="3">
    <source>
        <dbReference type="SAM" id="MobiDB-lite"/>
    </source>
</evidence>
<evidence type="ECO:0000305" key="4"/>
<keyword id="KW-0488">Methylation</keyword>
<keyword id="KW-1185">Reference proteome</keyword>
<keyword id="KW-0687">Ribonucleoprotein</keyword>
<keyword id="KW-0689">Ribosomal protein</keyword>
<keyword id="KW-0694">RNA-binding</keyword>
<keyword id="KW-0699">rRNA-binding</keyword>
<keyword id="KW-0820">tRNA-binding</keyword>
<proteinExistence type="inferred from homology"/>
<feature type="chain" id="PRO_1000194152" description="Small ribosomal subunit protein uS12">
    <location>
        <begin position="1"/>
        <end position="125"/>
    </location>
</feature>
<feature type="region of interest" description="Disordered" evidence="3">
    <location>
        <begin position="105"/>
        <end position="125"/>
    </location>
</feature>
<feature type="compositionally biased region" description="Basic residues" evidence="3">
    <location>
        <begin position="113"/>
        <end position="125"/>
    </location>
</feature>
<feature type="modified residue" description="3-methylthioaspartic acid" evidence="1">
    <location>
        <position position="89"/>
    </location>
</feature>
<organism>
    <name type="scientific">Delftia acidovorans (strain DSM 14801 / SPH-1)</name>
    <dbReference type="NCBI Taxonomy" id="398578"/>
    <lineage>
        <taxon>Bacteria</taxon>
        <taxon>Pseudomonadati</taxon>
        <taxon>Pseudomonadota</taxon>
        <taxon>Betaproteobacteria</taxon>
        <taxon>Burkholderiales</taxon>
        <taxon>Comamonadaceae</taxon>
        <taxon>Delftia</taxon>
    </lineage>
</organism>